<gene>
    <name evidence="5" type="primary">GOLM2</name>
    <name type="synonym">CASC4</name>
    <name type="ORF">UNQ2573/PRO6308</name>
</gene>
<feature type="chain" id="PRO_0000291843" description="Protein GOLM2">
    <location>
        <begin position="1"/>
        <end position="436"/>
    </location>
</feature>
<feature type="topological domain" description="Cytoplasmic" evidence="1">
    <location>
        <begin position="1"/>
        <end position="14"/>
    </location>
</feature>
<feature type="transmembrane region" description="Helical; Signal-anchor for type II membrane protein" evidence="1">
    <location>
        <begin position="15"/>
        <end position="35"/>
    </location>
</feature>
<feature type="topological domain" description="Lumenal" evidence="1">
    <location>
        <begin position="36"/>
        <end position="436"/>
    </location>
</feature>
<feature type="region of interest" description="Disordered" evidence="2">
    <location>
        <begin position="225"/>
        <end position="436"/>
    </location>
</feature>
<feature type="coiled-coil region" evidence="1">
    <location>
        <begin position="35"/>
        <end position="198"/>
    </location>
</feature>
<feature type="compositionally biased region" description="Basic and acidic residues" evidence="2">
    <location>
        <begin position="225"/>
        <end position="247"/>
    </location>
</feature>
<feature type="compositionally biased region" description="Polar residues" evidence="2">
    <location>
        <begin position="305"/>
        <end position="321"/>
    </location>
</feature>
<feature type="compositionally biased region" description="Basic and acidic residues" evidence="2">
    <location>
        <begin position="344"/>
        <end position="362"/>
    </location>
</feature>
<feature type="compositionally biased region" description="Acidic residues" evidence="2">
    <location>
        <begin position="399"/>
        <end position="418"/>
    </location>
</feature>
<feature type="compositionally biased region" description="Basic and acidic residues" evidence="2">
    <location>
        <begin position="426"/>
        <end position="436"/>
    </location>
</feature>
<feature type="modified residue" description="N-acetylmethionine" evidence="3 7">
    <location>
        <position position="1"/>
    </location>
</feature>
<feature type="modified residue" description="Phosphoserine" evidence="9">
    <location>
        <position position="233"/>
    </location>
</feature>
<feature type="modified residue" description="Phosphoserine" evidence="9">
    <location>
        <position position="275"/>
    </location>
</feature>
<feature type="modified residue" description="Phosphoserine" evidence="9">
    <location>
        <position position="328"/>
    </location>
</feature>
<feature type="modified residue" description="Phosphoserine" evidence="8 9">
    <location>
        <position position="332"/>
    </location>
</feature>
<feature type="modified residue" description="Phosphoserine" evidence="6 8 9">
    <location>
        <position position="366"/>
    </location>
</feature>
<feature type="splice variant" id="VSP_060178" description="In isoform 5.">
    <original>MVGFGANRRAGRLPSLVLVVLL</original>
    <variation>M</variation>
    <location>
        <begin position="1"/>
        <end position="22"/>
    </location>
</feature>
<feature type="splice variant" id="VSP_060179" description="In isoform 3.">
    <original>FQCGQQMKELRAQHE</original>
    <variation>KRPKRFNQMMERNWI</variation>
    <location>
        <begin position="163"/>
        <end position="177"/>
    </location>
</feature>
<feature type="splice variant" id="VSP_060180" description="In isoform 3.">
    <location>
        <begin position="178"/>
        <end position="436"/>
    </location>
</feature>
<feature type="splice variant" id="VSP_060181" description="In isoform 2.">
    <original>SRFFDENESPVDPQHGSKLADYNGDDGNVGEYEADKQAELAYNEEEDGDGGEEDVQD</original>
    <variation>N</variation>
    <location>
        <begin position="358"/>
        <end position="414"/>
    </location>
</feature>
<feature type="sequence conflict" description="In Ref. 3." evidence="4" ref="3">
    <original>K</original>
    <variation>E</variation>
    <location>
        <position position="429"/>
    </location>
</feature>
<proteinExistence type="evidence at protein level"/>
<name>GOLM2_HUMAN</name>
<sequence>MVGFGANRRAGRLPSLVLVVLLVVIVVLAFNYWSISSRHVLLQEEVAELQGQVQRTEVARGRLEKRNSDLLLLVDTHKKQIDQKEADYGRLSSRLQAREGLGKRCEDDKVKLQNNISYQMADIHHLKEQLAELRQEFLRQEDQLQDYRKNNTYLVKRLEYESFQCGQQMKELRAQHEENIKKLADQFLEEQKQETQKIQSNDGKELDINNQVVPKNIPKVAENVADKNEEPSSNHIPHGKEQIKRGGDAGMPGIEENDLAKVDDLPPALRKPPISVSQHESHQAISHLPTGQPLSPNMPPDSHINHNGNPGTSKQNPSSPLQRLIPGSNLDSEPRIQTDILKQATKDRVSDFHKLKQSRFFDENESPVDPQHGSKLADYNGDDGNVGEYEADKQAELAYNEEEDGDGGEEDVQDDEERELQMDPADYGKQHFNDVL</sequence>
<evidence type="ECO:0000255" key="1"/>
<evidence type="ECO:0000256" key="2">
    <source>
        <dbReference type="SAM" id="MobiDB-lite"/>
    </source>
</evidence>
<evidence type="ECO:0000269" key="3">
    <source>
    </source>
</evidence>
<evidence type="ECO:0000305" key="4"/>
<evidence type="ECO:0000312" key="5">
    <source>
        <dbReference type="HGNC" id="HGNC:24892"/>
    </source>
</evidence>
<evidence type="ECO:0007744" key="6">
    <source>
    </source>
</evidence>
<evidence type="ECO:0007744" key="7">
    <source>
    </source>
</evidence>
<evidence type="ECO:0007744" key="8">
    <source>
    </source>
</evidence>
<evidence type="ECO:0007744" key="9">
    <source>
    </source>
</evidence>
<keyword id="KW-0007">Acetylation</keyword>
<keyword id="KW-0025">Alternative splicing</keyword>
<keyword id="KW-0175">Coiled coil</keyword>
<keyword id="KW-0472">Membrane</keyword>
<keyword id="KW-0597">Phosphoprotein</keyword>
<keyword id="KW-1267">Proteomics identification</keyword>
<keyword id="KW-1185">Reference proteome</keyword>
<keyword id="KW-0735">Signal-anchor</keyword>
<keyword id="KW-0812">Transmembrane</keyword>
<keyword id="KW-1133">Transmembrane helix</keyword>
<accession>Q6P4E1</accession>
<accession>B4DPZ6</accession>
<accession>G5E934</accession>
<accession>Q6UY45</accession>
<accession>Q96EM1</accession>
<organism>
    <name type="scientific">Homo sapiens</name>
    <name type="common">Human</name>
    <dbReference type="NCBI Taxonomy" id="9606"/>
    <lineage>
        <taxon>Eukaryota</taxon>
        <taxon>Metazoa</taxon>
        <taxon>Chordata</taxon>
        <taxon>Craniata</taxon>
        <taxon>Vertebrata</taxon>
        <taxon>Euteleostomi</taxon>
        <taxon>Mammalia</taxon>
        <taxon>Eutheria</taxon>
        <taxon>Euarchontoglires</taxon>
        <taxon>Primates</taxon>
        <taxon>Haplorrhini</taxon>
        <taxon>Catarrhini</taxon>
        <taxon>Hominidae</taxon>
        <taxon>Homo</taxon>
    </lineage>
</organism>
<comment type="subcellular location">
    <subcellularLocation>
        <location evidence="4">Membrane</location>
        <topology evidence="4">Single-pass type II membrane protein</topology>
    </subcellularLocation>
</comment>
<comment type="alternative products">
    <event type="alternative splicing"/>
    <isoform>
        <id>Q6P4E1-4</id>
        <name>4</name>
        <sequence type="displayed"/>
    </isoform>
    <isoform>
        <id>Q6P4E1-2</id>
        <name>2</name>
        <sequence type="described" ref="VSP_060181"/>
    </isoform>
    <isoform>
        <id>Q6P4E1-3</id>
        <name>3</name>
        <sequence type="described" ref="VSP_060179 VSP_060180"/>
    </isoform>
    <isoform>
        <id>Q6P4E1-5</id>
        <name>5</name>
        <sequence type="described" ref="VSP_060178"/>
    </isoform>
</comment>
<comment type="similarity">
    <text evidence="4">Belongs to the GOLM family.</text>
</comment>
<comment type="sequence caution" evidence="4">
    <conflict type="miscellaneous discrepancy">
        <sequence resource="EMBL-CDS" id="AAH63480"/>
    </conflict>
    <text>Probable cloning artifact.</text>
</comment>
<protein>
    <recommendedName>
        <fullName evidence="4">Protein GOLM2</fullName>
    </recommendedName>
    <alternativeName>
        <fullName>Cancer susceptibility candidate gene 4 protein</fullName>
        <shortName>CASC4</shortName>
    </alternativeName>
    <alternativeName>
        <fullName evidence="4">Golgi membrane protein 2</fullName>
    </alternativeName>
</protein>
<dbReference type="EMBL" id="AY358086">
    <property type="protein sequence ID" value="AAQ88453.1"/>
    <property type="molecule type" value="mRNA"/>
</dbReference>
<dbReference type="EMBL" id="AK298564">
    <property type="protein sequence ID" value="BAG60758.1"/>
    <property type="molecule type" value="mRNA"/>
</dbReference>
<dbReference type="EMBL" id="AL832333">
    <property type="status" value="NOT_ANNOTATED_CDS"/>
    <property type="molecule type" value="mRNA"/>
</dbReference>
<dbReference type="EMBL" id="AC025043">
    <property type="status" value="NOT_ANNOTATED_CDS"/>
    <property type="molecule type" value="Genomic_DNA"/>
</dbReference>
<dbReference type="EMBL" id="AC090519">
    <property type="status" value="NOT_ANNOTATED_CDS"/>
    <property type="molecule type" value="Genomic_DNA"/>
</dbReference>
<dbReference type="EMBL" id="CH471082">
    <property type="protein sequence ID" value="EAW77258.1"/>
    <property type="molecule type" value="Genomic_DNA"/>
</dbReference>
<dbReference type="EMBL" id="BC012124">
    <property type="protein sequence ID" value="AAH12124.1"/>
    <property type="molecule type" value="mRNA"/>
</dbReference>
<dbReference type="EMBL" id="BC063480">
    <property type="protein sequence ID" value="AAH63480.1"/>
    <property type="status" value="ALT_SEQ"/>
    <property type="molecule type" value="mRNA"/>
</dbReference>
<dbReference type="CCDS" id="CCDS10108.1">
    <molecule id="Q6P4E1-4"/>
</dbReference>
<dbReference type="CCDS" id="CCDS10109.1">
    <molecule id="Q6P4E1-2"/>
</dbReference>
<dbReference type="RefSeq" id="NP_612432.2">
    <molecule id="Q6P4E1-4"/>
    <property type="nucleotide sequence ID" value="NM_138423.3"/>
</dbReference>
<dbReference type="RefSeq" id="NP_816929.1">
    <molecule id="Q6P4E1-2"/>
    <property type="nucleotide sequence ID" value="NM_177974.3"/>
</dbReference>
<dbReference type="SMR" id="Q6P4E1"/>
<dbReference type="BioGRID" id="125233">
    <property type="interactions" value="50"/>
</dbReference>
<dbReference type="FunCoup" id="Q6P4E1">
    <property type="interactions" value="1440"/>
</dbReference>
<dbReference type="IntAct" id="Q6P4E1">
    <property type="interactions" value="19"/>
</dbReference>
<dbReference type="MINT" id="Q6P4E1"/>
<dbReference type="STRING" id="9606.ENSP00000299957"/>
<dbReference type="GlyConnect" id="1652">
    <property type="glycosylation" value="4 N-Linked glycans (1 site)"/>
</dbReference>
<dbReference type="GlyCosmos" id="Q6P4E1">
    <property type="glycosylation" value="6 sites, 5 glycans"/>
</dbReference>
<dbReference type="GlyGen" id="Q6P4E1">
    <property type="glycosylation" value="19 sites, 5 N-linked glycans (2 sites), 4 O-linked glycans (14 sites)"/>
</dbReference>
<dbReference type="iPTMnet" id="Q6P4E1"/>
<dbReference type="PhosphoSitePlus" id="Q6P4E1"/>
<dbReference type="SwissPalm" id="Q6P4E1"/>
<dbReference type="BioMuta" id="CASC4"/>
<dbReference type="DMDM" id="74737334"/>
<dbReference type="jPOST" id="Q6P4E1"/>
<dbReference type="MassIVE" id="Q6P4E1"/>
<dbReference type="PaxDb" id="9606-ENSP00000299957"/>
<dbReference type="PeptideAtlas" id="Q6P4E1"/>
<dbReference type="ProteomicsDB" id="33815"/>
<dbReference type="ProteomicsDB" id="66964">
    <molecule id="Q6P4E1-2"/>
</dbReference>
<dbReference type="ProteomicsDB" id="66965">
    <molecule id="Q6P4E1-3"/>
</dbReference>
<dbReference type="Pumba" id="Q6P4E1"/>
<dbReference type="Antibodypedia" id="55771">
    <property type="antibodies" value="88 antibodies from 17 providers"/>
</dbReference>
<dbReference type="DNASU" id="113201"/>
<dbReference type="Ensembl" id="ENST00000299957.11">
    <molecule id="Q6P4E1-4"/>
    <property type="protein sequence ID" value="ENSP00000299957.6"/>
    <property type="gene ID" value="ENSG00000166734.20"/>
</dbReference>
<dbReference type="Ensembl" id="ENST00000345795.6">
    <molecule id="Q6P4E1-2"/>
    <property type="protein sequence ID" value="ENSP00000335063.4"/>
    <property type="gene ID" value="ENSG00000166734.20"/>
</dbReference>
<dbReference type="Ensembl" id="ENST00000557945.5">
    <molecule id="Q6P4E1-3"/>
    <property type="protein sequence ID" value="ENSP00000453720.1"/>
    <property type="gene ID" value="ENSG00000166734.20"/>
</dbReference>
<dbReference type="GeneID" id="113201"/>
<dbReference type="KEGG" id="hsa:113201"/>
<dbReference type="MANE-Select" id="ENST00000299957.11">
    <property type="protein sequence ID" value="ENSP00000299957.6"/>
    <property type="RefSeq nucleotide sequence ID" value="NM_138423.4"/>
    <property type="RefSeq protein sequence ID" value="NP_612432.2"/>
</dbReference>
<dbReference type="UCSC" id="uc001ztp.4">
    <molecule id="Q6P4E1-4"/>
    <property type="organism name" value="human"/>
</dbReference>
<dbReference type="AGR" id="HGNC:24892"/>
<dbReference type="CTD" id="113201"/>
<dbReference type="DisGeNET" id="113201"/>
<dbReference type="GeneCards" id="GOLM2"/>
<dbReference type="HGNC" id="HGNC:24892">
    <property type="gene designation" value="GOLM2"/>
</dbReference>
<dbReference type="HPA" id="ENSG00000166734">
    <property type="expression patterns" value="Low tissue specificity"/>
</dbReference>
<dbReference type="neXtProt" id="NX_Q6P4E1"/>
<dbReference type="OpenTargets" id="ENSG00000166734"/>
<dbReference type="VEuPathDB" id="HostDB:ENSG00000166734"/>
<dbReference type="eggNOG" id="ENOG502QTYH">
    <property type="taxonomic scope" value="Eukaryota"/>
</dbReference>
<dbReference type="GeneTree" id="ENSGT00530000063675"/>
<dbReference type="HOGENOM" id="CLU_129925_0_0_1"/>
<dbReference type="InParanoid" id="Q6P4E1"/>
<dbReference type="OMA" id="XRFFDEN"/>
<dbReference type="OrthoDB" id="10072022at2759"/>
<dbReference type="PAN-GO" id="Q6P4E1">
    <property type="GO annotations" value="0 GO annotations based on evolutionary models"/>
</dbReference>
<dbReference type="PhylomeDB" id="Q6P4E1"/>
<dbReference type="TreeFam" id="TF331127"/>
<dbReference type="PathwayCommons" id="Q6P4E1"/>
<dbReference type="SignaLink" id="Q6P4E1"/>
<dbReference type="BioGRID-ORCS" id="113201">
    <property type="hits" value="15 hits in 1156 CRISPR screens"/>
</dbReference>
<dbReference type="ChiTaRS" id="CASC4">
    <property type="organism name" value="human"/>
</dbReference>
<dbReference type="GenomeRNAi" id="113201"/>
<dbReference type="Pharos" id="Q6P4E1">
    <property type="development level" value="Tbio"/>
</dbReference>
<dbReference type="PRO" id="PR:Q6P4E1"/>
<dbReference type="Proteomes" id="UP000005640">
    <property type="component" value="Chromosome 15"/>
</dbReference>
<dbReference type="RNAct" id="Q6P4E1">
    <property type="molecule type" value="protein"/>
</dbReference>
<dbReference type="Bgee" id="ENSG00000166734">
    <property type="expression patterns" value="Expressed in calcaneal tendon and 188 other cell types or tissues"/>
</dbReference>
<dbReference type="ExpressionAtlas" id="Q6P4E1">
    <property type="expression patterns" value="baseline and differential"/>
</dbReference>
<dbReference type="GO" id="GO:0005794">
    <property type="term" value="C:Golgi apparatus"/>
    <property type="evidence" value="ECO:0000314"/>
    <property type="project" value="HPA"/>
</dbReference>
<dbReference type="GO" id="GO:0016020">
    <property type="term" value="C:membrane"/>
    <property type="evidence" value="ECO:0007669"/>
    <property type="project" value="UniProtKB-SubCell"/>
</dbReference>
<dbReference type="InterPro" id="IPR026139">
    <property type="entry name" value="GOLM1/CASC4"/>
</dbReference>
<dbReference type="PANTHER" id="PTHR15896">
    <property type="entry name" value="GOLGI PHOSPHOPROTEIN 2/GP73-RELATED"/>
    <property type="match status" value="1"/>
</dbReference>
<dbReference type="PANTHER" id="PTHR15896:SF7">
    <property type="entry name" value="PROTEIN GOLM2"/>
    <property type="match status" value="1"/>
</dbReference>
<dbReference type="PRINTS" id="PR02084">
    <property type="entry name" value="GOLM1CASC4"/>
</dbReference>
<reference key="1">
    <citation type="journal article" date="2003" name="Genome Res.">
        <title>The secreted protein discovery initiative (SPDI), a large-scale effort to identify novel human secreted and transmembrane proteins: a bioinformatics assessment.</title>
        <authorList>
            <person name="Clark H.F."/>
            <person name="Gurney A.L."/>
            <person name="Abaya E."/>
            <person name="Baker K."/>
            <person name="Baldwin D.T."/>
            <person name="Brush J."/>
            <person name="Chen J."/>
            <person name="Chow B."/>
            <person name="Chui C."/>
            <person name="Crowley C."/>
            <person name="Currell B."/>
            <person name="Deuel B."/>
            <person name="Dowd P."/>
            <person name="Eaton D."/>
            <person name="Foster J.S."/>
            <person name="Grimaldi C."/>
            <person name="Gu Q."/>
            <person name="Hass P.E."/>
            <person name="Heldens S."/>
            <person name="Huang A."/>
            <person name="Kim H.S."/>
            <person name="Klimowski L."/>
            <person name="Jin Y."/>
            <person name="Johnson S."/>
            <person name="Lee J."/>
            <person name="Lewis L."/>
            <person name="Liao D."/>
            <person name="Mark M.R."/>
            <person name="Robbie E."/>
            <person name="Sanchez C."/>
            <person name="Schoenfeld J."/>
            <person name="Seshagiri S."/>
            <person name="Simmons L."/>
            <person name="Singh J."/>
            <person name="Smith V."/>
            <person name="Stinson J."/>
            <person name="Vagts A."/>
            <person name="Vandlen R.L."/>
            <person name="Watanabe C."/>
            <person name="Wieand D."/>
            <person name="Woods K."/>
            <person name="Xie M.-H."/>
            <person name="Yansura D.G."/>
            <person name="Yi S."/>
            <person name="Yu G."/>
            <person name="Yuan J."/>
            <person name="Zhang M."/>
            <person name="Zhang Z."/>
            <person name="Goddard A.D."/>
            <person name="Wood W.I."/>
            <person name="Godowski P.J."/>
            <person name="Gray A.M."/>
        </authorList>
    </citation>
    <scope>NUCLEOTIDE SEQUENCE [LARGE SCALE MRNA] (ISOFORM 2)</scope>
</reference>
<reference key="2">
    <citation type="journal article" date="2004" name="Nat. Genet.">
        <title>Complete sequencing and characterization of 21,243 full-length human cDNAs.</title>
        <authorList>
            <person name="Ota T."/>
            <person name="Suzuki Y."/>
            <person name="Nishikawa T."/>
            <person name="Otsuki T."/>
            <person name="Sugiyama T."/>
            <person name="Irie R."/>
            <person name="Wakamatsu A."/>
            <person name="Hayashi K."/>
            <person name="Sato H."/>
            <person name="Nagai K."/>
            <person name="Kimura K."/>
            <person name="Makita H."/>
            <person name="Sekine M."/>
            <person name="Obayashi M."/>
            <person name="Nishi T."/>
            <person name="Shibahara T."/>
            <person name="Tanaka T."/>
            <person name="Ishii S."/>
            <person name="Yamamoto J."/>
            <person name="Saito K."/>
            <person name="Kawai Y."/>
            <person name="Isono Y."/>
            <person name="Nakamura Y."/>
            <person name="Nagahari K."/>
            <person name="Murakami K."/>
            <person name="Yasuda T."/>
            <person name="Iwayanagi T."/>
            <person name="Wagatsuma M."/>
            <person name="Shiratori A."/>
            <person name="Sudo H."/>
            <person name="Hosoiri T."/>
            <person name="Kaku Y."/>
            <person name="Kodaira H."/>
            <person name="Kondo H."/>
            <person name="Sugawara M."/>
            <person name="Takahashi M."/>
            <person name="Kanda K."/>
            <person name="Yokoi T."/>
            <person name="Furuya T."/>
            <person name="Kikkawa E."/>
            <person name="Omura Y."/>
            <person name="Abe K."/>
            <person name="Kamihara K."/>
            <person name="Katsuta N."/>
            <person name="Sato K."/>
            <person name="Tanikawa M."/>
            <person name="Yamazaki M."/>
            <person name="Ninomiya K."/>
            <person name="Ishibashi T."/>
            <person name="Yamashita H."/>
            <person name="Murakawa K."/>
            <person name="Fujimori K."/>
            <person name="Tanai H."/>
            <person name="Kimata M."/>
            <person name="Watanabe M."/>
            <person name="Hiraoka S."/>
            <person name="Chiba Y."/>
            <person name="Ishida S."/>
            <person name="Ono Y."/>
            <person name="Takiguchi S."/>
            <person name="Watanabe S."/>
            <person name="Yosida M."/>
            <person name="Hotuta T."/>
            <person name="Kusano J."/>
            <person name="Kanehori K."/>
            <person name="Takahashi-Fujii A."/>
            <person name="Hara H."/>
            <person name="Tanase T.-O."/>
            <person name="Nomura Y."/>
            <person name="Togiya S."/>
            <person name="Komai F."/>
            <person name="Hara R."/>
            <person name="Takeuchi K."/>
            <person name="Arita M."/>
            <person name="Imose N."/>
            <person name="Musashino K."/>
            <person name="Yuuki H."/>
            <person name="Oshima A."/>
            <person name="Sasaki N."/>
            <person name="Aotsuka S."/>
            <person name="Yoshikawa Y."/>
            <person name="Matsunawa H."/>
            <person name="Ichihara T."/>
            <person name="Shiohata N."/>
            <person name="Sano S."/>
            <person name="Moriya S."/>
            <person name="Momiyama H."/>
            <person name="Satoh N."/>
            <person name="Takami S."/>
            <person name="Terashima Y."/>
            <person name="Suzuki O."/>
            <person name="Nakagawa S."/>
            <person name="Senoh A."/>
            <person name="Mizoguchi H."/>
            <person name="Goto Y."/>
            <person name="Shimizu F."/>
            <person name="Wakebe H."/>
            <person name="Hishigaki H."/>
            <person name="Watanabe T."/>
            <person name="Sugiyama A."/>
            <person name="Takemoto M."/>
            <person name="Kawakami B."/>
            <person name="Yamazaki M."/>
            <person name="Watanabe K."/>
            <person name="Kumagai A."/>
            <person name="Itakura S."/>
            <person name="Fukuzumi Y."/>
            <person name="Fujimori Y."/>
            <person name="Komiyama M."/>
            <person name="Tashiro H."/>
            <person name="Tanigami A."/>
            <person name="Fujiwara T."/>
            <person name="Ono T."/>
            <person name="Yamada K."/>
            <person name="Fujii Y."/>
            <person name="Ozaki K."/>
            <person name="Hirao M."/>
            <person name="Ohmori Y."/>
            <person name="Kawabata A."/>
            <person name="Hikiji T."/>
            <person name="Kobatake N."/>
            <person name="Inagaki H."/>
            <person name="Ikema Y."/>
            <person name="Okamoto S."/>
            <person name="Okitani R."/>
            <person name="Kawakami T."/>
            <person name="Noguchi S."/>
            <person name="Itoh T."/>
            <person name="Shigeta K."/>
            <person name="Senba T."/>
            <person name="Matsumura K."/>
            <person name="Nakajima Y."/>
            <person name="Mizuno T."/>
            <person name="Morinaga M."/>
            <person name="Sasaki M."/>
            <person name="Togashi T."/>
            <person name="Oyama M."/>
            <person name="Hata H."/>
            <person name="Watanabe M."/>
            <person name="Komatsu T."/>
            <person name="Mizushima-Sugano J."/>
            <person name="Satoh T."/>
            <person name="Shirai Y."/>
            <person name="Takahashi Y."/>
            <person name="Nakagawa K."/>
            <person name="Okumura K."/>
            <person name="Nagase T."/>
            <person name="Nomura N."/>
            <person name="Kikuchi H."/>
            <person name="Masuho Y."/>
            <person name="Yamashita R."/>
            <person name="Nakai K."/>
            <person name="Yada T."/>
            <person name="Nakamura Y."/>
            <person name="Ohara O."/>
            <person name="Isogai T."/>
            <person name="Sugano S."/>
        </authorList>
    </citation>
    <scope>NUCLEOTIDE SEQUENCE [LARGE SCALE MRNA] (ISOFORM 5)</scope>
</reference>
<reference key="3">
    <citation type="journal article" date="2007" name="BMC Genomics">
        <title>The full-ORF clone resource of the German cDNA consortium.</title>
        <authorList>
            <person name="Bechtel S."/>
            <person name="Rosenfelder H."/>
            <person name="Duda A."/>
            <person name="Schmidt C.P."/>
            <person name="Ernst U."/>
            <person name="Wellenreuther R."/>
            <person name="Mehrle A."/>
            <person name="Schuster C."/>
            <person name="Bahr A."/>
            <person name="Bloecker H."/>
            <person name="Heubner D."/>
            <person name="Hoerlein A."/>
            <person name="Michel G."/>
            <person name="Wedler H."/>
            <person name="Koehrer K."/>
            <person name="Ottenwaelder B."/>
            <person name="Poustka A."/>
            <person name="Wiemann S."/>
            <person name="Schupp I."/>
        </authorList>
    </citation>
    <scope>NUCLEOTIDE SEQUENCE [LARGE SCALE MRNA] (ISOFORM 4)</scope>
</reference>
<reference key="4">
    <citation type="journal article" date="2006" name="Nature">
        <title>Analysis of the DNA sequence and duplication history of human chromosome 15.</title>
        <authorList>
            <person name="Zody M.C."/>
            <person name="Garber M."/>
            <person name="Sharpe T."/>
            <person name="Young S.K."/>
            <person name="Rowen L."/>
            <person name="O'Neill K."/>
            <person name="Whittaker C.A."/>
            <person name="Kamal M."/>
            <person name="Chang J.L."/>
            <person name="Cuomo C.A."/>
            <person name="Dewar K."/>
            <person name="FitzGerald M.G."/>
            <person name="Kodira C.D."/>
            <person name="Madan A."/>
            <person name="Qin S."/>
            <person name="Yang X."/>
            <person name="Abbasi N."/>
            <person name="Abouelleil A."/>
            <person name="Arachchi H.M."/>
            <person name="Baradarani L."/>
            <person name="Birditt B."/>
            <person name="Bloom S."/>
            <person name="Bloom T."/>
            <person name="Borowsky M.L."/>
            <person name="Burke J."/>
            <person name="Butler J."/>
            <person name="Cook A."/>
            <person name="DeArellano K."/>
            <person name="DeCaprio D."/>
            <person name="Dorris L. III"/>
            <person name="Dors M."/>
            <person name="Eichler E.E."/>
            <person name="Engels R."/>
            <person name="Fahey J."/>
            <person name="Fleetwood P."/>
            <person name="Friedman C."/>
            <person name="Gearin G."/>
            <person name="Hall J.L."/>
            <person name="Hensley G."/>
            <person name="Johnson E."/>
            <person name="Jones C."/>
            <person name="Kamat A."/>
            <person name="Kaur A."/>
            <person name="Locke D.P."/>
            <person name="Madan A."/>
            <person name="Munson G."/>
            <person name="Jaffe D.B."/>
            <person name="Lui A."/>
            <person name="Macdonald P."/>
            <person name="Mauceli E."/>
            <person name="Naylor J.W."/>
            <person name="Nesbitt R."/>
            <person name="Nicol R."/>
            <person name="O'Leary S.B."/>
            <person name="Ratcliffe A."/>
            <person name="Rounsley S."/>
            <person name="She X."/>
            <person name="Sneddon K.M.B."/>
            <person name="Stewart S."/>
            <person name="Sougnez C."/>
            <person name="Stone S.M."/>
            <person name="Topham K."/>
            <person name="Vincent D."/>
            <person name="Wang S."/>
            <person name="Zimmer A.R."/>
            <person name="Birren B.W."/>
            <person name="Hood L."/>
            <person name="Lander E.S."/>
            <person name="Nusbaum C."/>
        </authorList>
    </citation>
    <scope>NUCLEOTIDE SEQUENCE [LARGE SCALE GENOMIC DNA]</scope>
</reference>
<reference key="5">
    <citation type="submission" date="2005-07" db="EMBL/GenBank/DDBJ databases">
        <authorList>
            <person name="Mural R.J."/>
            <person name="Istrail S."/>
            <person name="Sutton G."/>
            <person name="Florea L."/>
            <person name="Halpern A.L."/>
            <person name="Mobarry C.M."/>
            <person name="Lippert R."/>
            <person name="Walenz B."/>
            <person name="Shatkay H."/>
            <person name="Dew I."/>
            <person name="Miller J.R."/>
            <person name="Flanigan M.J."/>
            <person name="Edwards N.J."/>
            <person name="Bolanos R."/>
            <person name="Fasulo D."/>
            <person name="Halldorsson B.V."/>
            <person name="Hannenhalli S."/>
            <person name="Turner R."/>
            <person name="Yooseph S."/>
            <person name="Lu F."/>
            <person name="Nusskern D.R."/>
            <person name="Shue B.C."/>
            <person name="Zheng X.H."/>
            <person name="Zhong F."/>
            <person name="Delcher A.L."/>
            <person name="Huson D.H."/>
            <person name="Kravitz S.A."/>
            <person name="Mouchard L."/>
            <person name="Reinert K."/>
            <person name="Remington K.A."/>
            <person name="Clark A.G."/>
            <person name="Waterman M.S."/>
            <person name="Eichler E.E."/>
            <person name="Adams M.D."/>
            <person name="Hunkapiller M.W."/>
            <person name="Myers E.W."/>
            <person name="Venter J.C."/>
        </authorList>
    </citation>
    <scope>NUCLEOTIDE SEQUENCE [LARGE SCALE GENOMIC DNA]</scope>
</reference>
<reference key="6">
    <citation type="journal article" date="2004" name="Genome Res.">
        <title>The status, quality, and expansion of the NIH full-length cDNA project: the Mammalian Gene Collection (MGC).</title>
        <authorList>
            <consortium name="The MGC Project Team"/>
        </authorList>
    </citation>
    <scope>NUCLEOTIDE SEQUENCE [LARGE SCALE MRNA] (ISOFORM 3)</scope>
    <source>
        <tissue>Blood</tissue>
        <tissue>Kidney</tissue>
    </source>
</reference>
<reference key="7">
    <citation type="journal article" date="2010" name="Sci. Signal.">
        <title>Quantitative phosphoproteomics reveals widespread full phosphorylation site occupancy during mitosis.</title>
        <authorList>
            <person name="Olsen J.V."/>
            <person name="Vermeulen M."/>
            <person name="Santamaria A."/>
            <person name="Kumar C."/>
            <person name="Miller M.L."/>
            <person name="Jensen L.J."/>
            <person name="Gnad F."/>
            <person name="Cox J."/>
            <person name="Jensen T.S."/>
            <person name="Nigg E.A."/>
            <person name="Brunak S."/>
            <person name="Mann M."/>
        </authorList>
    </citation>
    <scope>PHOSPHORYLATION [LARGE SCALE ANALYSIS] AT SER-366</scope>
    <scope>IDENTIFICATION BY MASS SPECTROMETRY [LARGE SCALE ANALYSIS]</scope>
    <source>
        <tissue>Cervix carcinoma</tissue>
    </source>
</reference>
<reference key="8">
    <citation type="journal article" date="2012" name="Proc. Natl. Acad. Sci. U.S.A.">
        <title>N-terminal acetylome analyses and functional insights of the N-terminal acetyltransferase NatB.</title>
        <authorList>
            <person name="Van Damme P."/>
            <person name="Lasa M."/>
            <person name="Polevoda B."/>
            <person name="Gazquez C."/>
            <person name="Elosegui-Artola A."/>
            <person name="Kim D.S."/>
            <person name="De Juan-Pardo E."/>
            <person name="Demeyer K."/>
            <person name="Hole K."/>
            <person name="Larrea E."/>
            <person name="Timmerman E."/>
            <person name="Prieto J."/>
            <person name="Arnesen T."/>
            <person name="Sherman F."/>
            <person name="Gevaert K."/>
            <person name="Aldabe R."/>
        </authorList>
    </citation>
    <scope>ACETYLATION [LARGE SCALE ANALYSIS] AT MET-1</scope>
    <scope>IDENTIFICATION BY MASS SPECTROMETRY [LARGE SCALE ANALYSIS]</scope>
</reference>
<reference key="9">
    <citation type="journal article" date="2013" name="J. Proteome Res.">
        <title>Toward a comprehensive characterization of a human cancer cell phosphoproteome.</title>
        <authorList>
            <person name="Zhou H."/>
            <person name="Di Palma S."/>
            <person name="Preisinger C."/>
            <person name="Peng M."/>
            <person name="Polat A.N."/>
            <person name="Heck A.J."/>
            <person name="Mohammed S."/>
        </authorList>
    </citation>
    <scope>PHOSPHORYLATION [LARGE SCALE ANALYSIS] AT SER-332 AND SER-366</scope>
    <scope>IDENTIFICATION BY MASS SPECTROMETRY [LARGE SCALE ANALYSIS]</scope>
    <source>
        <tissue>Cervix carcinoma</tissue>
    </source>
</reference>
<reference key="10">
    <citation type="journal article" date="2014" name="J. Proteomics">
        <title>An enzyme assisted RP-RPLC approach for in-depth analysis of human liver phosphoproteome.</title>
        <authorList>
            <person name="Bian Y."/>
            <person name="Song C."/>
            <person name="Cheng K."/>
            <person name="Dong M."/>
            <person name="Wang F."/>
            <person name="Huang J."/>
            <person name="Sun D."/>
            <person name="Wang L."/>
            <person name="Ye M."/>
            <person name="Zou H."/>
        </authorList>
    </citation>
    <scope>PHOSPHORYLATION [LARGE SCALE ANALYSIS] AT SER-233; SER-275; SER-328; SER-332 AND SER-366</scope>
    <scope>IDENTIFICATION BY MASS SPECTROMETRY [LARGE SCALE ANALYSIS]</scope>
    <source>
        <tissue>Liver</tissue>
    </source>
</reference>
<reference key="11">
    <citation type="journal article" date="2015" name="Cell Rep.">
        <title>An organellar nalpha-acetyltransferase, naa60, acetylates cytosolic N termini of transmembrane proteins and maintains Golgi integrity.</title>
        <authorList>
            <person name="Aksnes H."/>
            <person name="Van Damme P."/>
            <person name="Goris M."/>
            <person name="Starheim K.K."/>
            <person name="Marie M."/>
            <person name="Stoeve S.I."/>
            <person name="Hoel C."/>
            <person name="Kalvik T.V."/>
            <person name="Hole K."/>
            <person name="Glomnes N."/>
            <person name="Furnes C."/>
            <person name="Ljostveit S."/>
            <person name="Ziegler M."/>
            <person name="Niere M."/>
            <person name="Gevaert K."/>
            <person name="Arnesen T."/>
        </authorList>
    </citation>
    <scope>ACETYLATION AT MET-1</scope>
</reference>